<evidence type="ECO:0000255" key="1">
    <source>
        <dbReference type="HAMAP-Rule" id="MF_00711"/>
    </source>
</evidence>
<feature type="chain" id="PRO_1000083213" description="Glycine dehydrogenase (decarboxylating)">
    <location>
        <begin position="1"/>
        <end position="962"/>
    </location>
</feature>
<feature type="modified residue" description="N6-(pyridoxal phosphate)lysine" evidence="1">
    <location>
        <position position="709"/>
    </location>
</feature>
<gene>
    <name evidence="1" type="primary">gcvP</name>
    <name type="ordered locus">Sbal195_3799</name>
</gene>
<reference key="1">
    <citation type="submission" date="2007-11" db="EMBL/GenBank/DDBJ databases">
        <title>Complete sequence of chromosome of Shewanella baltica OS195.</title>
        <authorList>
            <consortium name="US DOE Joint Genome Institute"/>
            <person name="Copeland A."/>
            <person name="Lucas S."/>
            <person name="Lapidus A."/>
            <person name="Barry K."/>
            <person name="Glavina del Rio T."/>
            <person name="Dalin E."/>
            <person name="Tice H."/>
            <person name="Pitluck S."/>
            <person name="Chain P."/>
            <person name="Malfatti S."/>
            <person name="Shin M."/>
            <person name="Vergez L."/>
            <person name="Schmutz J."/>
            <person name="Larimer F."/>
            <person name="Land M."/>
            <person name="Hauser L."/>
            <person name="Kyrpides N."/>
            <person name="Kim E."/>
            <person name="Brettar I."/>
            <person name="Rodrigues J."/>
            <person name="Konstantinidis K."/>
            <person name="Klappenbach J."/>
            <person name="Hofle M."/>
            <person name="Tiedje J."/>
            <person name="Richardson P."/>
        </authorList>
    </citation>
    <scope>NUCLEOTIDE SEQUENCE [LARGE SCALE GENOMIC DNA]</scope>
    <source>
        <strain>OS195</strain>
    </source>
</reference>
<accession>A9L330</accession>
<name>GCSP_SHEB9</name>
<comment type="function">
    <text evidence="1">The glycine cleavage system catalyzes the degradation of glycine. The P protein binds the alpha-amino group of glycine through its pyridoxal phosphate cofactor; CO(2) is released and the remaining methylamine moiety is then transferred to the lipoamide cofactor of the H protein.</text>
</comment>
<comment type="catalytic activity">
    <reaction evidence="1">
        <text>N(6)-[(R)-lipoyl]-L-lysyl-[glycine-cleavage complex H protein] + glycine + H(+) = N(6)-[(R)-S(8)-aminomethyldihydrolipoyl]-L-lysyl-[glycine-cleavage complex H protein] + CO2</text>
        <dbReference type="Rhea" id="RHEA:24304"/>
        <dbReference type="Rhea" id="RHEA-COMP:10494"/>
        <dbReference type="Rhea" id="RHEA-COMP:10495"/>
        <dbReference type="ChEBI" id="CHEBI:15378"/>
        <dbReference type="ChEBI" id="CHEBI:16526"/>
        <dbReference type="ChEBI" id="CHEBI:57305"/>
        <dbReference type="ChEBI" id="CHEBI:83099"/>
        <dbReference type="ChEBI" id="CHEBI:83143"/>
        <dbReference type="EC" id="1.4.4.2"/>
    </reaction>
</comment>
<comment type="cofactor">
    <cofactor evidence="1">
        <name>pyridoxal 5'-phosphate</name>
        <dbReference type="ChEBI" id="CHEBI:597326"/>
    </cofactor>
</comment>
<comment type="subunit">
    <text evidence="1">The glycine cleavage system is composed of four proteins: P, T, L and H.</text>
</comment>
<comment type="similarity">
    <text evidence="1">Belongs to the GcvP family.</text>
</comment>
<dbReference type="EC" id="1.4.4.2" evidence="1"/>
<dbReference type="EMBL" id="CP000891">
    <property type="protein sequence ID" value="ABX50959.1"/>
    <property type="molecule type" value="Genomic_DNA"/>
</dbReference>
<dbReference type="RefSeq" id="WP_006084134.1">
    <property type="nucleotide sequence ID" value="NC_009997.1"/>
</dbReference>
<dbReference type="SMR" id="A9L330"/>
<dbReference type="GeneID" id="11773815"/>
<dbReference type="KEGG" id="sbn:Sbal195_3799"/>
<dbReference type="HOGENOM" id="CLU_004620_3_2_6"/>
<dbReference type="Proteomes" id="UP000000770">
    <property type="component" value="Chromosome"/>
</dbReference>
<dbReference type="GO" id="GO:0005829">
    <property type="term" value="C:cytosol"/>
    <property type="evidence" value="ECO:0007669"/>
    <property type="project" value="TreeGrafter"/>
</dbReference>
<dbReference type="GO" id="GO:0005960">
    <property type="term" value="C:glycine cleavage complex"/>
    <property type="evidence" value="ECO:0007669"/>
    <property type="project" value="TreeGrafter"/>
</dbReference>
<dbReference type="GO" id="GO:0016594">
    <property type="term" value="F:glycine binding"/>
    <property type="evidence" value="ECO:0007669"/>
    <property type="project" value="TreeGrafter"/>
</dbReference>
<dbReference type="GO" id="GO:0004375">
    <property type="term" value="F:glycine dehydrogenase (decarboxylating) activity"/>
    <property type="evidence" value="ECO:0007669"/>
    <property type="project" value="UniProtKB-EC"/>
</dbReference>
<dbReference type="GO" id="GO:0030170">
    <property type="term" value="F:pyridoxal phosphate binding"/>
    <property type="evidence" value="ECO:0007669"/>
    <property type="project" value="TreeGrafter"/>
</dbReference>
<dbReference type="GO" id="GO:0019464">
    <property type="term" value="P:glycine decarboxylation via glycine cleavage system"/>
    <property type="evidence" value="ECO:0007669"/>
    <property type="project" value="UniProtKB-UniRule"/>
</dbReference>
<dbReference type="CDD" id="cd00613">
    <property type="entry name" value="GDC-P"/>
    <property type="match status" value="2"/>
</dbReference>
<dbReference type="FunFam" id="3.40.640.10:FF:000005">
    <property type="entry name" value="Glycine dehydrogenase (decarboxylating), mitochondrial"/>
    <property type="match status" value="1"/>
</dbReference>
<dbReference type="FunFam" id="3.90.1150.10:FF:000007">
    <property type="entry name" value="Glycine dehydrogenase (decarboxylating), mitochondrial"/>
    <property type="match status" value="1"/>
</dbReference>
<dbReference type="FunFam" id="3.40.640.10:FF:000007">
    <property type="entry name" value="glycine dehydrogenase (Decarboxylating), mitochondrial"/>
    <property type="match status" value="1"/>
</dbReference>
<dbReference type="Gene3D" id="3.90.1150.10">
    <property type="entry name" value="Aspartate Aminotransferase, domain 1"/>
    <property type="match status" value="2"/>
</dbReference>
<dbReference type="Gene3D" id="3.40.640.10">
    <property type="entry name" value="Type I PLP-dependent aspartate aminotransferase-like (Major domain)"/>
    <property type="match status" value="2"/>
</dbReference>
<dbReference type="HAMAP" id="MF_00711">
    <property type="entry name" value="GcvP"/>
    <property type="match status" value="1"/>
</dbReference>
<dbReference type="InterPro" id="IPR003437">
    <property type="entry name" value="GcvP"/>
</dbReference>
<dbReference type="InterPro" id="IPR049316">
    <property type="entry name" value="GDC-P_C"/>
</dbReference>
<dbReference type="InterPro" id="IPR049315">
    <property type="entry name" value="GDC-P_N"/>
</dbReference>
<dbReference type="InterPro" id="IPR020581">
    <property type="entry name" value="GDC_P"/>
</dbReference>
<dbReference type="InterPro" id="IPR015424">
    <property type="entry name" value="PyrdxlP-dep_Trfase"/>
</dbReference>
<dbReference type="InterPro" id="IPR015421">
    <property type="entry name" value="PyrdxlP-dep_Trfase_major"/>
</dbReference>
<dbReference type="InterPro" id="IPR015422">
    <property type="entry name" value="PyrdxlP-dep_Trfase_small"/>
</dbReference>
<dbReference type="NCBIfam" id="TIGR00461">
    <property type="entry name" value="gcvP"/>
    <property type="match status" value="1"/>
</dbReference>
<dbReference type="NCBIfam" id="NF003346">
    <property type="entry name" value="PRK04366.1"/>
    <property type="match status" value="1"/>
</dbReference>
<dbReference type="PANTHER" id="PTHR11773:SF13">
    <property type="entry name" value="GLYCINE DEHYDROGENASE (DECARBOXYLATING)"/>
    <property type="match status" value="1"/>
</dbReference>
<dbReference type="PANTHER" id="PTHR11773">
    <property type="entry name" value="GLYCINE DEHYDROGENASE, DECARBOXYLATING"/>
    <property type="match status" value="1"/>
</dbReference>
<dbReference type="Pfam" id="PF21478">
    <property type="entry name" value="GcvP2_C"/>
    <property type="match status" value="1"/>
</dbReference>
<dbReference type="Pfam" id="PF02347">
    <property type="entry name" value="GDC-P"/>
    <property type="match status" value="2"/>
</dbReference>
<dbReference type="SUPFAM" id="SSF53383">
    <property type="entry name" value="PLP-dependent transferases"/>
    <property type="match status" value="2"/>
</dbReference>
<protein>
    <recommendedName>
        <fullName evidence="1">Glycine dehydrogenase (decarboxylating)</fullName>
        <ecNumber evidence="1">1.4.4.2</ecNumber>
    </recommendedName>
    <alternativeName>
        <fullName evidence="1">Glycine cleavage system P-protein</fullName>
    </alternativeName>
    <alternativeName>
        <fullName evidence="1">Glycine decarboxylase</fullName>
    </alternativeName>
    <alternativeName>
        <fullName evidence="1">Glycine dehydrogenase (aminomethyl-transferring)</fullName>
    </alternativeName>
</protein>
<proteinExistence type="inferred from homology"/>
<sequence>MTKQTLTQLEQHDLFLRRHIGPDSNQQQAMLNFVGAESLEDLTAQIVPESIRLSQDLSIGDSCGEAEGIAYIRGLADQNQVFKSYIGMGYYGTQVPNVILRNVFENPGWYTAYTPYQPEIAQGRLEAILNFQQVSMDLTGLDLASASLLDEATAAAEAMALAKRVSKAKKANIFFVADDVFPQTLDVVKTRAECFGFEVVVGPASEAVNYELFGALFQYTNRFGQITDFTELFATLRAKNVIVTVAADIMSLVLLKSPGSMGADVVFGSAQRFGVPMGFGGPHAAFFVARDEHKRSMPGRIIGVSKDARGNRALRMAMQTREQHIRREKANSNICTAQILLANMASFYAVFHGPDGLKTIASRINRFADILAAGLQAKGVSLVNSTWFDTISIKGLDVAAVNARALAAEMNLRFDTDGTVGISLDETTLRTDIDALFDVILGAGHGLDVAALDAQIVSQGSQSIPAALVRQDAILSHPTFNRYQSETEMMRYIKRLESKDLALNYSMISLGSCTMKLNAAVEMLPVSWPEFANMHPFSPLDQAKGYTQLIEELSTWLVNITGYDAVCIQPNSGAQGEYAGLLAIKKYHESRGDAHRNICLIPQSAHGTNPASAQLAGMQVVVTACDKQGNVDLEDLKTKAAEVAENLSCIMITYPSTHGVYEESIREICDIVHQHGGQVYLDGANMNAQVGLTSPGFIGADVSHLNLHKTFAIPHGGGGPGMGPIGVKSHLAPFVAGHVVVKPGRESDHNGAVSAAPYGSAGILPISWMYIKLLGSQGLKKSTQTALLNANYVMKKLSEHYPVLFRGRNDRVAHECIIDLRPLKEASGVTEMDIAKRLNDYGFHAPTMSFPVAGTLMIEPTESESKVELDRFIDAMVSIRAEIAKVESGEWPVDNNPLHNAPHTMADIMDPEFDTRPYSREVAVFPSAAVRTNKFWPTVNRIDDVYGDRNLMCSCAPLSDYE</sequence>
<keyword id="KW-0560">Oxidoreductase</keyword>
<keyword id="KW-0663">Pyridoxal phosphate</keyword>
<organism>
    <name type="scientific">Shewanella baltica (strain OS195)</name>
    <dbReference type="NCBI Taxonomy" id="399599"/>
    <lineage>
        <taxon>Bacteria</taxon>
        <taxon>Pseudomonadati</taxon>
        <taxon>Pseudomonadota</taxon>
        <taxon>Gammaproteobacteria</taxon>
        <taxon>Alteromonadales</taxon>
        <taxon>Shewanellaceae</taxon>
        <taxon>Shewanella</taxon>
    </lineage>
</organism>